<name>CH60_RICRI</name>
<accession>O34198</accession>
<keyword id="KW-0067">ATP-binding</keyword>
<keyword id="KW-0143">Chaperone</keyword>
<keyword id="KW-0963">Cytoplasm</keyword>
<keyword id="KW-0413">Isomerase</keyword>
<keyword id="KW-0547">Nucleotide-binding</keyword>
<organism>
    <name type="scientific">Rickettsia rickettsii</name>
    <dbReference type="NCBI Taxonomy" id="783"/>
    <lineage>
        <taxon>Bacteria</taxon>
        <taxon>Pseudomonadati</taxon>
        <taxon>Pseudomonadota</taxon>
        <taxon>Alphaproteobacteria</taxon>
        <taxon>Rickettsiales</taxon>
        <taxon>Rickettsiaceae</taxon>
        <taxon>Rickettsieae</taxon>
        <taxon>Rickettsia</taxon>
        <taxon>spotted fever group</taxon>
    </lineage>
</organism>
<proteinExistence type="inferred from homology"/>
<feature type="chain" id="PRO_0000063517" description="Chaperonin GroEL">
    <location>
        <begin position="1"/>
        <end position="408" status="greater than"/>
    </location>
</feature>
<feature type="binding site" evidence="1">
    <location>
        <begin position="30"/>
        <end position="33"/>
    </location>
    <ligand>
        <name>ATP</name>
        <dbReference type="ChEBI" id="CHEBI:30616"/>
    </ligand>
</feature>
<feature type="binding site" evidence="1">
    <location>
        <position position="51"/>
    </location>
    <ligand>
        <name>ATP</name>
        <dbReference type="ChEBI" id="CHEBI:30616"/>
    </ligand>
</feature>
<feature type="binding site" evidence="1">
    <location>
        <begin position="87"/>
        <end position="91"/>
    </location>
    <ligand>
        <name>ATP</name>
        <dbReference type="ChEBI" id="CHEBI:30616"/>
    </ligand>
</feature>
<feature type="non-terminal residue">
    <location>
        <position position="408"/>
    </location>
</feature>
<comment type="function">
    <text evidence="1">Together with its co-chaperonin GroES, plays an essential role in assisting protein folding. The GroEL-GroES system forms a nano-cage that allows encapsulation of the non-native substrate proteins and provides a physical environment optimized to promote and accelerate protein folding.</text>
</comment>
<comment type="catalytic activity">
    <reaction evidence="1">
        <text>ATP + H2O + a folded polypeptide = ADP + phosphate + an unfolded polypeptide.</text>
        <dbReference type="EC" id="5.6.1.7"/>
    </reaction>
</comment>
<comment type="subunit">
    <text evidence="1">Forms a cylinder of 14 subunits composed of two heptameric rings stacked back-to-back. Interacts with the co-chaperonin GroES.</text>
</comment>
<comment type="subcellular location">
    <subcellularLocation>
        <location evidence="1">Cytoplasm</location>
    </subcellularLocation>
</comment>
<comment type="similarity">
    <text evidence="1 2">Belongs to the chaperonin (HSP60) family.</text>
</comment>
<gene>
    <name evidence="1" type="primary">groEL</name>
    <name evidence="1" type="synonym">groL</name>
    <name type="synonym">mopA</name>
</gene>
<protein>
    <recommendedName>
        <fullName evidence="1">Chaperonin GroEL</fullName>
        <ecNumber evidence="1">5.6.1.7</ecNumber>
    </recommendedName>
    <alternativeName>
        <fullName evidence="1">60 kDa chaperonin</fullName>
    </alternativeName>
    <alternativeName>
        <fullName evidence="1">Chaperonin-60</fullName>
        <shortName evidence="1">Cpn60</shortName>
    </alternativeName>
</protein>
<evidence type="ECO:0000255" key="1">
    <source>
        <dbReference type="HAMAP-Rule" id="MF_00600"/>
    </source>
</evidence>
<evidence type="ECO:0000305" key="2"/>
<dbReference type="EC" id="5.6.1.7" evidence="1"/>
<dbReference type="EMBL" id="U96733">
    <property type="protein sequence ID" value="AAB65635.1"/>
    <property type="molecule type" value="Genomic_DNA"/>
</dbReference>
<dbReference type="SMR" id="O34198"/>
<dbReference type="GO" id="GO:0005737">
    <property type="term" value="C:cytoplasm"/>
    <property type="evidence" value="ECO:0007669"/>
    <property type="project" value="UniProtKB-SubCell"/>
</dbReference>
<dbReference type="GO" id="GO:0005524">
    <property type="term" value="F:ATP binding"/>
    <property type="evidence" value="ECO:0007669"/>
    <property type="project" value="UniProtKB-KW"/>
</dbReference>
<dbReference type="GO" id="GO:0140662">
    <property type="term" value="F:ATP-dependent protein folding chaperone"/>
    <property type="evidence" value="ECO:0007669"/>
    <property type="project" value="InterPro"/>
</dbReference>
<dbReference type="GO" id="GO:0016853">
    <property type="term" value="F:isomerase activity"/>
    <property type="evidence" value="ECO:0007669"/>
    <property type="project" value="UniProtKB-KW"/>
</dbReference>
<dbReference type="GO" id="GO:0042026">
    <property type="term" value="P:protein refolding"/>
    <property type="evidence" value="ECO:0007669"/>
    <property type="project" value="InterPro"/>
</dbReference>
<dbReference type="CDD" id="cd03344">
    <property type="entry name" value="GroEL"/>
    <property type="match status" value="1"/>
</dbReference>
<dbReference type="FunFam" id="3.50.7.10:FF:000001">
    <property type="entry name" value="60 kDa chaperonin"/>
    <property type="match status" value="1"/>
</dbReference>
<dbReference type="Gene3D" id="3.50.7.10">
    <property type="entry name" value="GroEL"/>
    <property type="match status" value="1"/>
</dbReference>
<dbReference type="Gene3D" id="1.10.560.10">
    <property type="entry name" value="GroEL-like equatorial domain"/>
    <property type="match status" value="1"/>
</dbReference>
<dbReference type="Gene3D" id="3.30.260.10">
    <property type="entry name" value="TCP-1-like chaperonin intermediate domain"/>
    <property type="match status" value="1"/>
</dbReference>
<dbReference type="InterPro" id="IPR001844">
    <property type="entry name" value="Cpn60/GroEL"/>
</dbReference>
<dbReference type="InterPro" id="IPR002423">
    <property type="entry name" value="Cpn60/GroEL/TCP-1"/>
</dbReference>
<dbReference type="InterPro" id="IPR027409">
    <property type="entry name" value="GroEL-like_apical_dom_sf"/>
</dbReference>
<dbReference type="InterPro" id="IPR027413">
    <property type="entry name" value="GROEL-like_equatorial_sf"/>
</dbReference>
<dbReference type="InterPro" id="IPR027410">
    <property type="entry name" value="TCP-1-like_intermed_sf"/>
</dbReference>
<dbReference type="NCBIfam" id="TIGR02348">
    <property type="entry name" value="GroEL"/>
    <property type="match status" value="1"/>
</dbReference>
<dbReference type="NCBIfam" id="NF000592">
    <property type="entry name" value="PRK00013.1"/>
    <property type="match status" value="1"/>
</dbReference>
<dbReference type="NCBIfam" id="NF009487">
    <property type="entry name" value="PRK12849.1"/>
    <property type="match status" value="1"/>
</dbReference>
<dbReference type="NCBIfam" id="NF009488">
    <property type="entry name" value="PRK12850.1"/>
    <property type="match status" value="1"/>
</dbReference>
<dbReference type="NCBIfam" id="NF009489">
    <property type="entry name" value="PRK12851.1"/>
    <property type="match status" value="1"/>
</dbReference>
<dbReference type="PANTHER" id="PTHR45633">
    <property type="entry name" value="60 KDA HEAT SHOCK PROTEIN, MITOCHONDRIAL"/>
    <property type="match status" value="1"/>
</dbReference>
<dbReference type="Pfam" id="PF00118">
    <property type="entry name" value="Cpn60_TCP1"/>
    <property type="match status" value="1"/>
</dbReference>
<dbReference type="PRINTS" id="PR00298">
    <property type="entry name" value="CHAPERONIN60"/>
</dbReference>
<dbReference type="SUPFAM" id="SSF52029">
    <property type="entry name" value="GroEL apical domain-like"/>
    <property type="match status" value="1"/>
</dbReference>
<dbReference type="SUPFAM" id="SSF48592">
    <property type="entry name" value="GroEL equatorial domain-like"/>
    <property type="match status" value="1"/>
</dbReference>
<reference key="1">
    <citation type="journal article" date="1997" name="J. Clin. Microbiol.">
        <title>PCR amplification and comparison of nucleotide sequences from the groESL heat shock operon of Ehrlichia species.</title>
        <authorList>
            <person name="Sumner J.W."/>
            <person name="Nicholson W.L."/>
            <person name="Massung R.F."/>
        </authorList>
    </citation>
    <scope>NUCLEOTIDE SEQUENCE [GENOMIC DNA]</scope>
    <source>
        <strain>R</strain>
    </source>
</reference>
<sequence length="408" mass="43986">MATKLIKHGSKAREQMLEGIDILADAVKVTLGPKGRNVLIEQSFGSPKITKDGVTVAKSIELKDKIRNAGAQLLKSAATKAAEVAGDGTTTATVLARALAREGNKLVAAGYNPMDLKRGMDLAVNAVVEEIKKSSKKINSQEEIAQVGTISSNGDKEIGEKIAKAMEEVGKEGVITVEEAKNFSFDVEVVKGMMFDRGYLSPYFVTNSEKMVAELENPFILLFEKKLSNLQPMLPILEAVVQSQRPLLIIAEDVEGEALATLVVNRLRGGLKVAAVKAPGFGDRRKAMMEDIAILTKGELITEDLGMKLENVSIKSLGTAKRVTISKENTVIVDGNGDKKNIEDRVLQIKSQIAETTSDYDKEKLQERLAKLSGGVAVLKVGGATEVEVKERKDRVEDALAATRAAVE</sequence>